<reference key="1">
    <citation type="journal article" date="2003" name="Nature">
        <title>The genome sequence of Bacillus anthracis Ames and comparison to closely related bacteria.</title>
        <authorList>
            <person name="Read T.D."/>
            <person name="Peterson S.N."/>
            <person name="Tourasse N.J."/>
            <person name="Baillie L.W."/>
            <person name="Paulsen I.T."/>
            <person name="Nelson K.E."/>
            <person name="Tettelin H."/>
            <person name="Fouts D.E."/>
            <person name="Eisen J.A."/>
            <person name="Gill S.R."/>
            <person name="Holtzapple E.K."/>
            <person name="Okstad O.A."/>
            <person name="Helgason E."/>
            <person name="Rilstone J."/>
            <person name="Wu M."/>
            <person name="Kolonay J.F."/>
            <person name="Beanan M.J."/>
            <person name="Dodson R.J."/>
            <person name="Brinkac L.M."/>
            <person name="Gwinn M.L."/>
            <person name="DeBoy R.T."/>
            <person name="Madpu R."/>
            <person name="Daugherty S.C."/>
            <person name="Durkin A.S."/>
            <person name="Haft D.H."/>
            <person name="Nelson W.C."/>
            <person name="Peterson J.D."/>
            <person name="Pop M."/>
            <person name="Khouri H.M."/>
            <person name="Radune D."/>
            <person name="Benton J.L."/>
            <person name="Mahamoud Y."/>
            <person name="Jiang L."/>
            <person name="Hance I.R."/>
            <person name="Weidman J.F."/>
            <person name="Berry K.J."/>
            <person name="Plaut R.D."/>
            <person name="Wolf A.M."/>
            <person name="Watkins K.L."/>
            <person name="Nierman W.C."/>
            <person name="Hazen A."/>
            <person name="Cline R.T."/>
            <person name="Redmond C."/>
            <person name="Thwaite J.E."/>
            <person name="White O."/>
            <person name="Salzberg S.L."/>
            <person name="Thomason B."/>
            <person name="Friedlander A.M."/>
            <person name="Koehler T.M."/>
            <person name="Hanna P.C."/>
            <person name="Kolstoe A.-B."/>
            <person name="Fraser C.M."/>
        </authorList>
    </citation>
    <scope>NUCLEOTIDE SEQUENCE [LARGE SCALE GENOMIC DNA]</scope>
    <source>
        <strain>Ames / isolate Porton</strain>
    </source>
</reference>
<reference key="2">
    <citation type="journal article" date="2009" name="J. Bacteriol.">
        <title>The complete genome sequence of Bacillus anthracis Ames 'Ancestor'.</title>
        <authorList>
            <person name="Ravel J."/>
            <person name="Jiang L."/>
            <person name="Stanley S.T."/>
            <person name="Wilson M.R."/>
            <person name="Decker R.S."/>
            <person name="Read T.D."/>
            <person name="Worsham P."/>
            <person name="Keim P.S."/>
            <person name="Salzberg S.L."/>
            <person name="Fraser-Liggett C.M."/>
            <person name="Rasko D.A."/>
        </authorList>
    </citation>
    <scope>NUCLEOTIDE SEQUENCE [LARGE SCALE GENOMIC DNA]</scope>
    <source>
        <strain>Ames ancestor</strain>
    </source>
</reference>
<reference key="3">
    <citation type="submission" date="2004-01" db="EMBL/GenBank/DDBJ databases">
        <title>Complete genome sequence of Bacillus anthracis Sterne.</title>
        <authorList>
            <person name="Brettin T.S."/>
            <person name="Bruce D."/>
            <person name="Challacombe J.F."/>
            <person name="Gilna P."/>
            <person name="Han C."/>
            <person name="Hill K."/>
            <person name="Hitchcock P."/>
            <person name="Jackson P."/>
            <person name="Keim P."/>
            <person name="Longmire J."/>
            <person name="Lucas S."/>
            <person name="Okinaka R."/>
            <person name="Richardson P."/>
            <person name="Rubin E."/>
            <person name="Tice H."/>
        </authorList>
    </citation>
    <scope>NUCLEOTIDE SEQUENCE [LARGE SCALE GENOMIC DNA]</scope>
    <source>
        <strain>Sterne</strain>
    </source>
</reference>
<dbReference type="EC" id="2.7.1.39" evidence="1"/>
<dbReference type="EMBL" id="AE016879">
    <property type="protein sequence ID" value="AAP25862.1"/>
    <property type="molecule type" value="Genomic_DNA"/>
</dbReference>
<dbReference type="EMBL" id="AE017334">
    <property type="protein sequence ID" value="AAT31089.1"/>
    <property type="molecule type" value="Genomic_DNA"/>
</dbReference>
<dbReference type="EMBL" id="AE017225">
    <property type="protein sequence ID" value="AAT54142.1"/>
    <property type="molecule type" value="Genomic_DNA"/>
</dbReference>
<dbReference type="RefSeq" id="NP_844376.1">
    <property type="nucleotide sequence ID" value="NC_003997.3"/>
</dbReference>
<dbReference type="RefSeq" id="WP_000612671.1">
    <property type="nucleotide sequence ID" value="NZ_WXXJ01000029.1"/>
</dbReference>
<dbReference type="RefSeq" id="YP_028091.1">
    <property type="nucleotide sequence ID" value="NC_005945.1"/>
</dbReference>
<dbReference type="SMR" id="Q81RS0"/>
<dbReference type="STRING" id="261594.GBAA_1970"/>
<dbReference type="DNASU" id="1085942"/>
<dbReference type="GeneID" id="45021892"/>
<dbReference type="KEGG" id="ban:BA_1970"/>
<dbReference type="KEGG" id="bar:GBAA_1970"/>
<dbReference type="KEGG" id="bat:BAS1827"/>
<dbReference type="PATRIC" id="fig|198094.11.peg.1941"/>
<dbReference type="eggNOG" id="COG0083">
    <property type="taxonomic scope" value="Bacteria"/>
</dbReference>
<dbReference type="HOGENOM" id="CLU_041243_0_0_9"/>
<dbReference type="OMA" id="CANRIPH"/>
<dbReference type="OrthoDB" id="9769912at2"/>
<dbReference type="UniPathway" id="UPA00050">
    <property type="reaction ID" value="UER00064"/>
</dbReference>
<dbReference type="Proteomes" id="UP000000427">
    <property type="component" value="Chromosome"/>
</dbReference>
<dbReference type="Proteomes" id="UP000000594">
    <property type="component" value="Chromosome"/>
</dbReference>
<dbReference type="GO" id="GO:0005737">
    <property type="term" value="C:cytoplasm"/>
    <property type="evidence" value="ECO:0007669"/>
    <property type="project" value="UniProtKB-SubCell"/>
</dbReference>
<dbReference type="GO" id="GO:0005524">
    <property type="term" value="F:ATP binding"/>
    <property type="evidence" value="ECO:0007669"/>
    <property type="project" value="UniProtKB-UniRule"/>
</dbReference>
<dbReference type="GO" id="GO:0004413">
    <property type="term" value="F:homoserine kinase activity"/>
    <property type="evidence" value="ECO:0007669"/>
    <property type="project" value="UniProtKB-UniRule"/>
</dbReference>
<dbReference type="GO" id="GO:0009088">
    <property type="term" value="P:threonine biosynthetic process"/>
    <property type="evidence" value="ECO:0007669"/>
    <property type="project" value="UniProtKB-UniRule"/>
</dbReference>
<dbReference type="Gene3D" id="3.30.230.10">
    <property type="match status" value="1"/>
</dbReference>
<dbReference type="Gene3D" id="3.30.70.890">
    <property type="entry name" value="GHMP kinase, C-terminal domain"/>
    <property type="match status" value="1"/>
</dbReference>
<dbReference type="HAMAP" id="MF_00384">
    <property type="entry name" value="Homoser_kinase"/>
    <property type="match status" value="1"/>
</dbReference>
<dbReference type="InterPro" id="IPR013750">
    <property type="entry name" value="GHMP_kinase_C_dom"/>
</dbReference>
<dbReference type="InterPro" id="IPR036554">
    <property type="entry name" value="GHMP_kinase_C_sf"/>
</dbReference>
<dbReference type="InterPro" id="IPR006204">
    <property type="entry name" value="GHMP_kinase_N_dom"/>
</dbReference>
<dbReference type="InterPro" id="IPR006203">
    <property type="entry name" value="GHMP_knse_ATP-bd_CS"/>
</dbReference>
<dbReference type="InterPro" id="IPR000870">
    <property type="entry name" value="Homoserine_kinase"/>
</dbReference>
<dbReference type="InterPro" id="IPR020568">
    <property type="entry name" value="Ribosomal_Su5_D2-typ_SF"/>
</dbReference>
<dbReference type="InterPro" id="IPR014721">
    <property type="entry name" value="Ribsml_uS5_D2-typ_fold_subgr"/>
</dbReference>
<dbReference type="NCBIfam" id="TIGR00191">
    <property type="entry name" value="thrB"/>
    <property type="match status" value="1"/>
</dbReference>
<dbReference type="PANTHER" id="PTHR20861:SF1">
    <property type="entry name" value="HOMOSERINE KINASE"/>
    <property type="match status" value="1"/>
</dbReference>
<dbReference type="PANTHER" id="PTHR20861">
    <property type="entry name" value="HOMOSERINE/4-DIPHOSPHOCYTIDYL-2-C-METHYL-D-ERYTHRITOL KINASE"/>
    <property type="match status" value="1"/>
</dbReference>
<dbReference type="Pfam" id="PF08544">
    <property type="entry name" value="GHMP_kinases_C"/>
    <property type="match status" value="1"/>
</dbReference>
<dbReference type="Pfam" id="PF00288">
    <property type="entry name" value="GHMP_kinases_N"/>
    <property type="match status" value="1"/>
</dbReference>
<dbReference type="PIRSF" id="PIRSF000676">
    <property type="entry name" value="Homoser_kin"/>
    <property type="match status" value="1"/>
</dbReference>
<dbReference type="PRINTS" id="PR00958">
    <property type="entry name" value="HOMSERKINASE"/>
</dbReference>
<dbReference type="SUPFAM" id="SSF55060">
    <property type="entry name" value="GHMP Kinase, C-terminal domain"/>
    <property type="match status" value="1"/>
</dbReference>
<dbReference type="SUPFAM" id="SSF54211">
    <property type="entry name" value="Ribosomal protein S5 domain 2-like"/>
    <property type="match status" value="1"/>
</dbReference>
<dbReference type="PROSITE" id="PS00627">
    <property type="entry name" value="GHMP_KINASES_ATP"/>
    <property type="match status" value="1"/>
</dbReference>
<organism>
    <name type="scientific">Bacillus anthracis</name>
    <dbReference type="NCBI Taxonomy" id="1392"/>
    <lineage>
        <taxon>Bacteria</taxon>
        <taxon>Bacillati</taxon>
        <taxon>Bacillota</taxon>
        <taxon>Bacilli</taxon>
        <taxon>Bacillales</taxon>
        <taxon>Bacillaceae</taxon>
        <taxon>Bacillus</taxon>
        <taxon>Bacillus cereus group</taxon>
    </lineage>
</organism>
<gene>
    <name evidence="1" type="primary">thrB</name>
    <name type="ordered locus">BA_1970</name>
    <name type="ordered locus">GBAA_1970</name>
    <name type="ordered locus">BAS1827</name>
</gene>
<protein>
    <recommendedName>
        <fullName evidence="1">Homoserine kinase</fullName>
        <shortName evidence="1">HK</shortName>
        <shortName evidence="1">HSK</shortName>
        <ecNumber evidence="1">2.7.1.39</ecNumber>
    </recommendedName>
</protein>
<evidence type="ECO:0000255" key="1">
    <source>
        <dbReference type="HAMAP-Rule" id="MF_00384"/>
    </source>
</evidence>
<keyword id="KW-0028">Amino-acid biosynthesis</keyword>
<keyword id="KW-0067">ATP-binding</keyword>
<keyword id="KW-0963">Cytoplasm</keyword>
<keyword id="KW-0418">Kinase</keyword>
<keyword id="KW-0547">Nucleotide-binding</keyword>
<keyword id="KW-1185">Reference proteome</keyword>
<keyword id="KW-0791">Threonine biosynthesis</keyword>
<keyword id="KW-0808">Transferase</keyword>
<feature type="chain" id="PRO_0000156547" description="Homoserine kinase">
    <location>
        <begin position="1"/>
        <end position="297"/>
    </location>
</feature>
<feature type="binding site" evidence="1">
    <location>
        <begin position="82"/>
        <end position="92"/>
    </location>
    <ligand>
        <name>ATP</name>
        <dbReference type="ChEBI" id="CHEBI:30616"/>
    </ligand>
</feature>
<proteinExistence type="inferred from homology"/>
<sequence>MIPLSIRVPASTANVGPGFDSVGIALSLYLHVVVKEKSDKWQVIHSFEDSIPTDDKNLIVSTACKVCPSLSPHIIEVTSNIPLTRGLGSSASAIVAGIELANQLGKLNLTIDQKVQIATNFEGHPDNVAASILGGTVIGALDGKNVSVVRIESKELGVISLIPNEELNTDESRSVLPDVFPFHEAVKASAISNVLVAALCQKKWKVVGEMMERDHFHEPYRLELVPLLPSIRKCAKEFGAYGTALSGAGPSIFILTPYEKRQEIAEQLARVFTSMKVCELEIDHRGITVNKKEHIGL</sequence>
<comment type="function">
    <text evidence="1">Catalyzes the ATP-dependent phosphorylation of L-homoserine to L-homoserine phosphate.</text>
</comment>
<comment type="catalytic activity">
    <reaction evidence="1">
        <text>L-homoserine + ATP = O-phospho-L-homoserine + ADP + H(+)</text>
        <dbReference type="Rhea" id="RHEA:13985"/>
        <dbReference type="ChEBI" id="CHEBI:15378"/>
        <dbReference type="ChEBI" id="CHEBI:30616"/>
        <dbReference type="ChEBI" id="CHEBI:57476"/>
        <dbReference type="ChEBI" id="CHEBI:57590"/>
        <dbReference type="ChEBI" id="CHEBI:456216"/>
        <dbReference type="EC" id="2.7.1.39"/>
    </reaction>
</comment>
<comment type="pathway">
    <text evidence="1">Amino-acid biosynthesis; L-threonine biosynthesis; L-threonine from L-aspartate: step 4/5.</text>
</comment>
<comment type="subcellular location">
    <subcellularLocation>
        <location evidence="1">Cytoplasm</location>
    </subcellularLocation>
</comment>
<comment type="similarity">
    <text evidence="1">Belongs to the GHMP kinase family. Homoserine kinase subfamily.</text>
</comment>
<accession>Q81RS0</accession>
<accession>Q6HZZ7</accession>
<accession>Q6KTX6</accession>
<name>KHSE_BACAN</name>